<name>DBP8_PYRO7</name>
<protein>
    <recommendedName>
        <fullName>ATP-dependent RNA helicase DBP8</fullName>
        <ecNumber>3.6.4.13</ecNumber>
    </recommendedName>
</protein>
<sequence length="579" mass="64046">MAKIKSQRQLVSMTKDSSPRQPASEPHSSDSDSSDEESDHLDAVSSRKKRKLSVDFSQEEGDDEDDNQDESDDDDDVDEDGGKMKQPVAKPTFAFNAPSRIKRHPAKGDSERIGKGQPVTDAEMEDAVQSVAQAAGKKRILAPTDQNTTFESLGVEPWLVQSLANLAVKRPTGIQKGCIGEILKGRDCIGGSRTGSGKTIAFAVPILQKYAQDPSAIFAVVLTATRELALQIYEQFKAVSSPHVLKAALIIGGSDMRSQAIALAQRPSIVIATPGRLADHIRSSGEDTICGLRRVKFLVLDEADRLLSSKGPGSMLPHIDECMAVLPPPEDRQTLLFTATVTPEVRALKEMPTRPGKEPVHVCEVDTQVLAIPDSLKQSYIQLTVTHREHFLHEFLLTAANTERSIIIFVNRTSTAQFLHHLLRLLDHRVTSLHSKLRQQQRIDNLGRFRASAARILVATDVASRGLDIPEVSVVVNYDLPRDPDDYIHRVGRTARAGRKGEAVNFVGQRDVELVLAIEKRVGRPMEKWEEEGVNLETRVIRDSLKLVSEKKREALLNIEENREVGGRRKRQKLKLGAE</sequence>
<comment type="function">
    <text evidence="1">ATP-binding RNA helicase involved in 40S ribosomal subunit biogenesis and is required for the normal formation of 18S rRNAs through pre-rRNA processing at A0, A1 and A2 sites. Required for vegetative growth (By similarity).</text>
</comment>
<comment type="catalytic activity">
    <reaction>
        <text>ATP + H2O = ADP + phosphate + H(+)</text>
        <dbReference type="Rhea" id="RHEA:13065"/>
        <dbReference type="ChEBI" id="CHEBI:15377"/>
        <dbReference type="ChEBI" id="CHEBI:15378"/>
        <dbReference type="ChEBI" id="CHEBI:30616"/>
        <dbReference type="ChEBI" id="CHEBI:43474"/>
        <dbReference type="ChEBI" id="CHEBI:456216"/>
        <dbReference type="EC" id="3.6.4.13"/>
    </reaction>
</comment>
<comment type="subcellular location">
    <subcellularLocation>
        <location evidence="1">Nucleus</location>
        <location evidence="1">Nucleolus</location>
    </subcellularLocation>
</comment>
<comment type="domain">
    <text>The Q motif is unique to and characteristic of the DEAD box family of RNA helicases and controls ATP binding and hydrolysis.</text>
</comment>
<comment type="similarity">
    <text evidence="5">Belongs to the DEAD box helicase family. DDX49/DBP8 subfamily.</text>
</comment>
<keyword id="KW-0067">ATP-binding</keyword>
<keyword id="KW-0347">Helicase</keyword>
<keyword id="KW-0378">Hydrolase</keyword>
<keyword id="KW-0547">Nucleotide-binding</keyword>
<keyword id="KW-0539">Nucleus</keyword>
<keyword id="KW-1185">Reference proteome</keyword>
<keyword id="KW-0690">Ribosome biogenesis</keyword>
<keyword id="KW-0694">RNA-binding</keyword>
<keyword id="KW-0698">rRNA processing</keyword>
<proteinExistence type="inferred from homology"/>
<organism>
    <name type="scientific">Pyricularia oryzae (strain 70-15 / ATCC MYA-4617 / FGSC 8958)</name>
    <name type="common">Rice blast fungus</name>
    <name type="synonym">Magnaporthe oryzae</name>
    <dbReference type="NCBI Taxonomy" id="242507"/>
    <lineage>
        <taxon>Eukaryota</taxon>
        <taxon>Fungi</taxon>
        <taxon>Dikarya</taxon>
        <taxon>Ascomycota</taxon>
        <taxon>Pezizomycotina</taxon>
        <taxon>Sordariomycetes</taxon>
        <taxon>Sordariomycetidae</taxon>
        <taxon>Magnaporthales</taxon>
        <taxon>Pyriculariaceae</taxon>
        <taxon>Pyricularia</taxon>
    </lineage>
</organism>
<reference key="1">
    <citation type="journal article" date="2005" name="Nature">
        <title>The genome sequence of the rice blast fungus Magnaporthe grisea.</title>
        <authorList>
            <person name="Dean R.A."/>
            <person name="Talbot N.J."/>
            <person name="Ebbole D.J."/>
            <person name="Farman M.L."/>
            <person name="Mitchell T.K."/>
            <person name="Orbach M.J."/>
            <person name="Thon M.R."/>
            <person name="Kulkarni R."/>
            <person name="Xu J.-R."/>
            <person name="Pan H."/>
            <person name="Read N.D."/>
            <person name="Lee Y.-H."/>
            <person name="Carbone I."/>
            <person name="Brown D."/>
            <person name="Oh Y.Y."/>
            <person name="Donofrio N."/>
            <person name="Jeong J.S."/>
            <person name="Soanes D.M."/>
            <person name="Djonovic S."/>
            <person name="Kolomiets E."/>
            <person name="Rehmeyer C."/>
            <person name="Li W."/>
            <person name="Harding M."/>
            <person name="Kim S."/>
            <person name="Lebrun M.-H."/>
            <person name="Bohnert H."/>
            <person name="Coughlan S."/>
            <person name="Butler J."/>
            <person name="Calvo S.E."/>
            <person name="Ma L.-J."/>
            <person name="Nicol R."/>
            <person name="Purcell S."/>
            <person name="Nusbaum C."/>
            <person name="Galagan J.E."/>
            <person name="Birren B.W."/>
        </authorList>
    </citation>
    <scope>NUCLEOTIDE SEQUENCE [LARGE SCALE GENOMIC DNA]</scope>
    <source>
        <strain>70-15 / ATCC MYA-4617 / FGSC 8958</strain>
    </source>
</reference>
<gene>
    <name type="primary">DBP8</name>
    <name type="ORF">MGG_06483</name>
</gene>
<dbReference type="EC" id="3.6.4.13"/>
<dbReference type="EMBL" id="CM001234">
    <property type="protein sequence ID" value="EHA50759.1"/>
    <property type="molecule type" value="Genomic_DNA"/>
</dbReference>
<dbReference type="RefSeq" id="XP_003717078.1">
    <property type="nucleotide sequence ID" value="XM_003717030.1"/>
</dbReference>
<dbReference type="SMR" id="A4R8G3"/>
<dbReference type="FunCoup" id="A4R8G3">
    <property type="interactions" value="812"/>
</dbReference>
<dbReference type="STRING" id="242507.A4R8G3"/>
<dbReference type="EnsemblFungi" id="MGG_06483T0">
    <property type="protein sequence ID" value="MGG_06483T0"/>
    <property type="gene ID" value="MGG_06483"/>
</dbReference>
<dbReference type="GeneID" id="2684638"/>
<dbReference type="KEGG" id="mgr:MGG_06483"/>
<dbReference type="VEuPathDB" id="FungiDB:MGG_06483"/>
<dbReference type="eggNOG" id="KOG0340">
    <property type="taxonomic scope" value="Eukaryota"/>
</dbReference>
<dbReference type="HOGENOM" id="CLU_003041_1_1_1"/>
<dbReference type="InParanoid" id="A4R8G3"/>
<dbReference type="OMA" id="GMPYPKQ"/>
<dbReference type="OrthoDB" id="10261904at2759"/>
<dbReference type="Proteomes" id="UP000009058">
    <property type="component" value="Chromosome 4"/>
</dbReference>
<dbReference type="GO" id="GO:0005829">
    <property type="term" value="C:cytosol"/>
    <property type="evidence" value="ECO:0007669"/>
    <property type="project" value="TreeGrafter"/>
</dbReference>
<dbReference type="GO" id="GO:0005730">
    <property type="term" value="C:nucleolus"/>
    <property type="evidence" value="ECO:0007669"/>
    <property type="project" value="UniProtKB-SubCell"/>
</dbReference>
<dbReference type="GO" id="GO:0005524">
    <property type="term" value="F:ATP binding"/>
    <property type="evidence" value="ECO:0007669"/>
    <property type="project" value="UniProtKB-KW"/>
</dbReference>
<dbReference type="GO" id="GO:0016887">
    <property type="term" value="F:ATP hydrolysis activity"/>
    <property type="evidence" value="ECO:0007669"/>
    <property type="project" value="RHEA"/>
</dbReference>
<dbReference type="GO" id="GO:0003723">
    <property type="term" value="F:RNA binding"/>
    <property type="evidence" value="ECO:0007669"/>
    <property type="project" value="UniProtKB-KW"/>
</dbReference>
<dbReference type="GO" id="GO:0003724">
    <property type="term" value="F:RNA helicase activity"/>
    <property type="evidence" value="ECO:0007669"/>
    <property type="project" value="UniProtKB-EC"/>
</dbReference>
<dbReference type="GO" id="GO:0006364">
    <property type="term" value="P:rRNA processing"/>
    <property type="evidence" value="ECO:0007669"/>
    <property type="project" value="UniProtKB-KW"/>
</dbReference>
<dbReference type="CDD" id="cd17955">
    <property type="entry name" value="DEADc_DDX49"/>
    <property type="match status" value="1"/>
</dbReference>
<dbReference type="CDD" id="cd18787">
    <property type="entry name" value="SF2_C_DEAD"/>
    <property type="match status" value="1"/>
</dbReference>
<dbReference type="Gene3D" id="3.40.50.300">
    <property type="entry name" value="P-loop containing nucleotide triphosphate hydrolases"/>
    <property type="match status" value="2"/>
</dbReference>
<dbReference type="InterPro" id="IPR011545">
    <property type="entry name" value="DEAD/DEAH_box_helicase_dom"/>
</dbReference>
<dbReference type="InterPro" id="IPR050079">
    <property type="entry name" value="DEAD_box_RNA_helicase"/>
</dbReference>
<dbReference type="InterPro" id="IPR014001">
    <property type="entry name" value="Helicase_ATP-bd"/>
</dbReference>
<dbReference type="InterPro" id="IPR001650">
    <property type="entry name" value="Helicase_C-like"/>
</dbReference>
<dbReference type="InterPro" id="IPR027417">
    <property type="entry name" value="P-loop_NTPase"/>
</dbReference>
<dbReference type="InterPro" id="IPR000629">
    <property type="entry name" value="RNA-helicase_DEAD-box_CS"/>
</dbReference>
<dbReference type="InterPro" id="IPR014014">
    <property type="entry name" value="RNA_helicase_DEAD_Q_motif"/>
</dbReference>
<dbReference type="PANTHER" id="PTHR47959:SF24">
    <property type="entry name" value="ATP-DEPENDENT RNA HELICASE"/>
    <property type="match status" value="1"/>
</dbReference>
<dbReference type="PANTHER" id="PTHR47959">
    <property type="entry name" value="ATP-DEPENDENT RNA HELICASE RHLE-RELATED"/>
    <property type="match status" value="1"/>
</dbReference>
<dbReference type="Pfam" id="PF00270">
    <property type="entry name" value="DEAD"/>
    <property type="match status" value="1"/>
</dbReference>
<dbReference type="Pfam" id="PF00271">
    <property type="entry name" value="Helicase_C"/>
    <property type="match status" value="1"/>
</dbReference>
<dbReference type="SMART" id="SM00487">
    <property type="entry name" value="DEXDc"/>
    <property type="match status" value="1"/>
</dbReference>
<dbReference type="SMART" id="SM00490">
    <property type="entry name" value="HELICc"/>
    <property type="match status" value="1"/>
</dbReference>
<dbReference type="SUPFAM" id="SSF52540">
    <property type="entry name" value="P-loop containing nucleoside triphosphate hydrolases"/>
    <property type="match status" value="1"/>
</dbReference>
<dbReference type="PROSITE" id="PS00039">
    <property type="entry name" value="DEAD_ATP_HELICASE"/>
    <property type="match status" value="1"/>
</dbReference>
<dbReference type="PROSITE" id="PS51192">
    <property type="entry name" value="HELICASE_ATP_BIND_1"/>
    <property type="match status" value="1"/>
</dbReference>
<dbReference type="PROSITE" id="PS51194">
    <property type="entry name" value="HELICASE_CTER"/>
    <property type="match status" value="1"/>
</dbReference>
<dbReference type="PROSITE" id="PS51195">
    <property type="entry name" value="Q_MOTIF"/>
    <property type="match status" value="1"/>
</dbReference>
<evidence type="ECO:0000250" key="1"/>
<evidence type="ECO:0000255" key="2">
    <source>
        <dbReference type="PROSITE-ProRule" id="PRU00541"/>
    </source>
</evidence>
<evidence type="ECO:0000255" key="3">
    <source>
        <dbReference type="PROSITE-ProRule" id="PRU00542"/>
    </source>
</evidence>
<evidence type="ECO:0000256" key="4">
    <source>
        <dbReference type="SAM" id="MobiDB-lite"/>
    </source>
</evidence>
<evidence type="ECO:0000305" key="5"/>
<accession>A4R8G3</accession>
<accession>G4N6Z5</accession>
<feature type="chain" id="PRO_0000294656" description="ATP-dependent RNA helicase DBP8">
    <location>
        <begin position="1"/>
        <end position="579"/>
    </location>
</feature>
<feature type="domain" description="Helicase ATP-binding" evidence="2">
    <location>
        <begin position="179"/>
        <end position="359"/>
    </location>
</feature>
<feature type="domain" description="Helicase C-terminal" evidence="3">
    <location>
        <begin position="391"/>
        <end position="537"/>
    </location>
</feature>
<feature type="region of interest" description="Disordered" evidence="4">
    <location>
        <begin position="1"/>
        <end position="117"/>
    </location>
</feature>
<feature type="short sequence motif" description="Q motif">
    <location>
        <begin position="148"/>
        <end position="176"/>
    </location>
</feature>
<feature type="short sequence motif" description="DEAD box">
    <location>
        <begin position="301"/>
        <end position="304"/>
    </location>
</feature>
<feature type="compositionally biased region" description="Polar residues" evidence="4">
    <location>
        <begin position="7"/>
        <end position="21"/>
    </location>
</feature>
<feature type="compositionally biased region" description="Acidic residues" evidence="4">
    <location>
        <begin position="57"/>
        <end position="79"/>
    </location>
</feature>
<feature type="binding site" evidence="2">
    <location>
        <begin position="192"/>
        <end position="199"/>
    </location>
    <ligand>
        <name>ATP</name>
        <dbReference type="ChEBI" id="CHEBI:30616"/>
    </ligand>
</feature>